<gene>
    <name type="ordered locus">FPV218</name>
</gene>
<organism>
    <name type="scientific">Fowlpox virus (strain NVSL)</name>
    <name type="common">FPV</name>
    <dbReference type="NCBI Taxonomy" id="928301"/>
    <lineage>
        <taxon>Viruses</taxon>
        <taxon>Varidnaviria</taxon>
        <taxon>Bamfordvirae</taxon>
        <taxon>Nucleocytoviricota</taxon>
        <taxon>Pokkesviricetes</taxon>
        <taxon>Chitovirales</taxon>
        <taxon>Poxviridae</taxon>
        <taxon>Chordopoxvirinae</taxon>
        <taxon>Avipoxvirus</taxon>
        <taxon>Fowlpox virus</taxon>
    </lineage>
</organism>
<name>V218_FOWPN</name>
<reference key="1">
    <citation type="journal article" date="2000" name="J. Virol.">
        <title>The genome of fowlpox virus.</title>
        <authorList>
            <person name="Afonso C.L."/>
            <person name="Tulman E.R."/>
            <person name="Lu Z."/>
            <person name="Zsak L."/>
            <person name="Kutish G.F."/>
            <person name="Rock D.L."/>
        </authorList>
    </citation>
    <scope>NUCLEOTIDE SEQUENCE [LARGE SCALE GENOMIC DNA]</scope>
</reference>
<proteinExistence type="predicted"/>
<organismHost>
    <name type="scientific">Vertebrata</name>
    <dbReference type="NCBI Taxonomy" id="7742"/>
</organismHost>
<keyword id="KW-0040">ANK repeat</keyword>
<keyword id="KW-1185">Reference proteome</keyword>
<keyword id="KW-0677">Repeat</keyword>
<protein>
    <recommendedName>
        <fullName>Putative ankyrin repeat protein FPV218</fullName>
    </recommendedName>
</protein>
<dbReference type="EMBL" id="AF198100">
    <property type="protein sequence ID" value="AAF44562.1"/>
    <property type="molecule type" value="Genomic_DNA"/>
</dbReference>
<dbReference type="RefSeq" id="NP_039181.1">
    <property type="nucleotide sequence ID" value="NC_002188.1"/>
</dbReference>
<dbReference type="SMR" id="Q9J517"/>
<dbReference type="GeneID" id="1486790"/>
<dbReference type="KEGG" id="vg:1486790"/>
<dbReference type="Proteomes" id="UP000008597">
    <property type="component" value="Segment"/>
</dbReference>
<dbReference type="Gene3D" id="1.25.40.20">
    <property type="entry name" value="Ankyrin repeat-containing domain"/>
    <property type="match status" value="3"/>
</dbReference>
<dbReference type="InterPro" id="IPR002110">
    <property type="entry name" value="Ankyrin_rpt"/>
</dbReference>
<dbReference type="InterPro" id="IPR036770">
    <property type="entry name" value="Ankyrin_rpt-contain_sf"/>
</dbReference>
<dbReference type="InterPro" id="IPR018272">
    <property type="entry name" value="PRANC_domain"/>
</dbReference>
<dbReference type="PANTHER" id="PTHR24198">
    <property type="entry name" value="ANKYRIN REPEAT AND PROTEIN KINASE DOMAIN-CONTAINING PROTEIN"/>
    <property type="match status" value="1"/>
</dbReference>
<dbReference type="PANTHER" id="PTHR24198:SF165">
    <property type="entry name" value="ANKYRIN REPEAT-CONTAINING PROTEIN-RELATED"/>
    <property type="match status" value="1"/>
</dbReference>
<dbReference type="Pfam" id="PF00023">
    <property type="entry name" value="Ank"/>
    <property type="match status" value="1"/>
</dbReference>
<dbReference type="Pfam" id="PF12796">
    <property type="entry name" value="Ank_2"/>
    <property type="match status" value="2"/>
</dbReference>
<dbReference type="Pfam" id="PF13637">
    <property type="entry name" value="Ank_4"/>
    <property type="match status" value="1"/>
</dbReference>
<dbReference type="Pfam" id="PF09372">
    <property type="entry name" value="PRANC"/>
    <property type="match status" value="1"/>
</dbReference>
<dbReference type="SMART" id="SM00248">
    <property type="entry name" value="ANK"/>
    <property type="match status" value="9"/>
</dbReference>
<dbReference type="SUPFAM" id="SSF48403">
    <property type="entry name" value="Ankyrin repeat"/>
    <property type="match status" value="1"/>
</dbReference>
<dbReference type="PROSITE" id="PS50297">
    <property type="entry name" value="ANK_REP_REGION"/>
    <property type="match status" value="1"/>
</dbReference>
<dbReference type="PROSITE" id="PS50088">
    <property type="entry name" value="ANK_REPEAT"/>
    <property type="match status" value="3"/>
</dbReference>
<accession>Q9J517</accession>
<feature type="chain" id="PRO_0000067114" description="Putative ankyrin repeat protein FPV218">
    <location>
        <begin position="1"/>
        <end position="461"/>
    </location>
</feature>
<feature type="repeat" description="ANK 1">
    <location>
        <begin position="1"/>
        <end position="28"/>
    </location>
</feature>
<feature type="repeat" description="ANK 2">
    <location>
        <begin position="31"/>
        <end position="61"/>
    </location>
</feature>
<feature type="repeat" description="ANK 3">
    <location>
        <begin position="65"/>
        <end position="94"/>
    </location>
</feature>
<feature type="repeat" description="ANK 4">
    <location>
        <begin position="96"/>
        <end position="116"/>
    </location>
</feature>
<feature type="repeat" description="ANK 5">
    <location>
        <begin position="120"/>
        <end position="149"/>
    </location>
</feature>
<feature type="repeat" description="ANK 6">
    <location>
        <begin position="153"/>
        <end position="182"/>
    </location>
</feature>
<feature type="repeat" description="ANK 7">
    <location>
        <begin position="186"/>
        <end position="213"/>
    </location>
</feature>
<feature type="repeat" description="ANK 8">
    <location>
        <begin position="217"/>
        <end position="248"/>
    </location>
</feature>
<feature type="repeat" description="ANK 9">
    <location>
        <begin position="250"/>
        <end position="277"/>
    </location>
</feature>
<feature type="repeat" description="ANK 10">
    <location>
        <begin position="281"/>
        <end position="312"/>
    </location>
</feature>
<feature type="repeat" description="ANK 11">
    <location>
        <begin position="358"/>
        <end position="385"/>
    </location>
</feature>
<feature type="repeat" description="ANK 12">
    <location>
        <begin position="431"/>
        <end position="460"/>
    </location>
</feature>
<sequence length="461" mass="52636">MLSLYYAINYKNRKMVERLLREGVHPDSTIKGFYRPLVKSILLRDVDLVSILLQNGANPNNINDETVSPLAIAIKVNSPTIVSLLLDYNADTSLFPLYVSFPIIKVLVYHGIDVNVIDRESRSFLHYAAKNDDVDTVISLILHGANVNVQDSKGLSPLHHAVSKKTTLTAKILLENGARVNIRDSLGRLPLHLGANTYEMVKLLIDYGSPIDIKDVNGSTPLHYAIWKSSLDTIRLLVNVSTINALDNNCNSPLHYIILSETEILVELLLRGADITIKDICGNTPLDILCKLRIKKLDNIKAIISNAFLMREVVPDLLKLCGFESNRKIISNISDLKQHEVSCIKEIHLMKEHSFRKNGPTILDVCTDKVHFLHRLVNARDNVQYKDFPIYCKYIKFRIEKAIYKKTIIEKTILLLDDILIKHEYTSWHDLPYELKHYIIEYINIEFIKSLLEHTNLKNKE</sequence>